<comment type="function">
    <text evidence="1">Involved in peptide bond synthesis. Stimulates efficient translation and peptide-bond synthesis on native or reconstituted 70S ribosomes in vitro. Probably functions indirectly by altering the affinity of the ribosome for aminoacyl-tRNA, thus increasing their reactivity as acceptors for peptidyl transferase.</text>
</comment>
<comment type="pathway">
    <text evidence="1">Protein biosynthesis; polypeptide chain elongation.</text>
</comment>
<comment type="subcellular location">
    <subcellularLocation>
        <location evidence="1">Cytoplasm</location>
    </subcellularLocation>
</comment>
<comment type="similarity">
    <text evidence="1">Belongs to the elongation factor P family.</text>
</comment>
<dbReference type="EMBL" id="CP001649">
    <property type="protein sequence ID" value="ACS79956.1"/>
    <property type="molecule type" value="Genomic_DNA"/>
</dbReference>
<dbReference type="RefSeq" id="WP_015851772.1">
    <property type="nucleotide sequence ID" value="NC_012881.1"/>
</dbReference>
<dbReference type="SMR" id="C6BUE7"/>
<dbReference type="STRING" id="526222.Desal_1895"/>
<dbReference type="KEGG" id="dsa:Desal_1895"/>
<dbReference type="eggNOG" id="COG0231">
    <property type="taxonomic scope" value="Bacteria"/>
</dbReference>
<dbReference type="HOGENOM" id="CLU_074944_0_1_7"/>
<dbReference type="OrthoDB" id="9801844at2"/>
<dbReference type="UniPathway" id="UPA00345"/>
<dbReference type="Proteomes" id="UP000002601">
    <property type="component" value="Chromosome"/>
</dbReference>
<dbReference type="GO" id="GO:0005737">
    <property type="term" value="C:cytoplasm"/>
    <property type="evidence" value="ECO:0007669"/>
    <property type="project" value="UniProtKB-SubCell"/>
</dbReference>
<dbReference type="GO" id="GO:0003746">
    <property type="term" value="F:translation elongation factor activity"/>
    <property type="evidence" value="ECO:0007669"/>
    <property type="project" value="UniProtKB-UniRule"/>
</dbReference>
<dbReference type="GO" id="GO:0043043">
    <property type="term" value="P:peptide biosynthetic process"/>
    <property type="evidence" value="ECO:0007669"/>
    <property type="project" value="InterPro"/>
</dbReference>
<dbReference type="CDD" id="cd04470">
    <property type="entry name" value="S1_EF-P_repeat_1"/>
    <property type="match status" value="1"/>
</dbReference>
<dbReference type="CDD" id="cd05794">
    <property type="entry name" value="S1_EF-P_repeat_2"/>
    <property type="match status" value="1"/>
</dbReference>
<dbReference type="FunFam" id="2.30.30.30:FF:000003">
    <property type="entry name" value="Elongation factor P"/>
    <property type="match status" value="1"/>
</dbReference>
<dbReference type="FunFam" id="2.40.50.140:FF:000004">
    <property type="entry name" value="Elongation factor P"/>
    <property type="match status" value="1"/>
</dbReference>
<dbReference type="FunFam" id="2.40.50.140:FF:000009">
    <property type="entry name" value="Elongation factor P"/>
    <property type="match status" value="1"/>
</dbReference>
<dbReference type="Gene3D" id="2.30.30.30">
    <property type="match status" value="1"/>
</dbReference>
<dbReference type="Gene3D" id="2.40.50.140">
    <property type="entry name" value="Nucleic acid-binding proteins"/>
    <property type="match status" value="2"/>
</dbReference>
<dbReference type="HAMAP" id="MF_00141">
    <property type="entry name" value="EF_P"/>
    <property type="match status" value="1"/>
</dbReference>
<dbReference type="InterPro" id="IPR015365">
    <property type="entry name" value="Elong-fact-P_C"/>
</dbReference>
<dbReference type="InterPro" id="IPR012340">
    <property type="entry name" value="NA-bd_OB-fold"/>
</dbReference>
<dbReference type="InterPro" id="IPR014722">
    <property type="entry name" value="Rib_uL2_dom2"/>
</dbReference>
<dbReference type="InterPro" id="IPR020599">
    <property type="entry name" value="Transl_elong_fac_P/YeiP"/>
</dbReference>
<dbReference type="InterPro" id="IPR013185">
    <property type="entry name" value="Transl_elong_KOW-like"/>
</dbReference>
<dbReference type="InterPro" id="IPR001059">
    <property type="entry name" value="Transl_elong_P/YeiP_cen"/>
</dbReference>
<dbReference type="InterPro" id="IPR013852">
    <property type="entry name" value="Transl_elong_P/YeiP_CS"/>
</dbReference>
<dbReference type="InterPro" id="IPR011768">
    <property type="entry name" value="Transl_elongation_fac_P"/>
</dbReference>
<dbReference type="InterPro" id="IPR008991">
    <property type="entry name" value="Translation_prot_SH3-like_sf"/>
</dbReference>
<dbReference type="NCBIfam" id="TIGR00038">
    <property type="entry name" value="efp"/>
    <property type="match status" value="1"/>
</dbReference>
<dbReference type="NCBIfam" id="NF001810">
    <property type="entry name" value="PRK00529.1"/>
    <property type="match status" value="1"/>
</dbReference>
<dbReference type="PANTHER" id="PTHR30053">
    <property type="entry name" value="ELONGATION FACTOR P"/>
    <property type="match status" value="1"/>
</dbReference>
<dbReference type="PANTHER" id="PTHR30053:SF12">
    <property type="entry name" value="ELONGATION FACTOR P (EF-P) FAMILY PROTEIN"/>
    <property type="match status" value="1"/>
</dbReference>
<dbReference type="Pfam" id="PF01132">
    <property type="entry name" value="EFP"/>
    <property type="match status" value="1"/>
</dbReference>
<dbReference type="Pfam" id="PF08207">
    <property type="entry name" value="EFP_N"/>
    <property type="match status" value="1"/>
</dbReference>
<dbReference type="Pfam" id="PF09285">
    <property type="entry name" value="Elong-fact-P_C"/>
    <property type="match status" value="1"/>
</dbReference>
<dbReference type="PIRSF" id="PIRSF005901">
    <property type="entry name" value="EF-P"/>
    <property type="match status" value="1"/>
</dbReference>
<dbReference type="SMART" id="SM01185">
    <property type="entry name" value="EFP"/>
    <property type="match status" value="1"/>
</dbReference>
<dbReference type="SMART" id="SM00841">
    <property type="entry name" value="Elong-fact-P_C"/>
    <property type="match status" value="1"/>
</dbReference>
<dbReference type="SUPFAM" id="SSF50249">
    <property type="entry name" value="Nucleic acid-binding proteins"/>
    <property type="match status" value="2"/>
</dbReference>
<dbReference type="SUPFAM" id="SSF50104">
    <property type="entry name" value="Translation proteins SH3-like domain"/>
    <property type="match status" value="1"/>
</dbReference>
<dbReference type="PROSITE" id="PS01275">
    <property type="entry name" value="EFP"/>
    <property type="match status" value="1"/>
</dbReference>
<protein>
    <recommendedName>
        <fullName evidence="1">Elongation factor P</fullName>
        <shortName evidence="1">EF-P</shortName>
    </recommendedName>
</protein>
<evidence type="ECO:0000255" key="1">
    <source>
        <dbReference type="HAMAP-Rule" id="MF_00141"/>
    </source>
</evidence>
<feature type="chain" id="PRO_1000203263" description="Elongation factor P">
    <location>
        <begin position="1"/>
        <end position="186"/>
    </location>
</feature>
<organism>
    <name type="scientific">Maridesulfovibrio salexigens (strain ATCC 14822 / DSM 2638 / NCIMB 8403 / VKM B-1763)</name>
    <name type="common">Desulfovibrio salexigens</name>
    <dbReference type="NCBI Taxonomy" id="526222"/>
    <lineage>
        <taxon>Bacteria</taxon>
        <taxon>Pseudomonadati</taxon>
        <taxon>Thermodesulfobacteriota</taxon>
        <taxon>Desulfovibrionia</taxon>
        <taxon>Desulfovibrionales</taxon>
        <taxon>Desulfovibrionaceae</taxon>
        <taxon>Maridesulfovibrio</taxon>
    </lineage>
</organism>
<proteinExistence type="inferred from homology"/>
<sequence length="186" mass="20679">MISTKDFRNGLKIEIDGKPYEIVEFQHFKPGKGGAFVRTKLRNMFTGRITDQTFRSGEKVKKPDMATKEMQYLYKDGEDYVLMDLESYEQMNVAADVIATAGGFLKEGETNKALLYNGEVIGIELPASVILEVTQTDPGVQGDRVSNATKPATLETGLGINVPLFINEGDKIKVDTRSSEYLGREK</sequence>
<keyword id="KW-0963">Cytoplasm</keyword>
<keyword id="KW-0251">Elongation factor</keyword>
<keyword id="KW-0648">Protein biosynthesis</keyword>
<keyword id="KW-1185">Reference proteome</keyword>
<name>EFP_MARSD</name>
<accession>C6BUE7</accession>
<gene>
    <name evidence="1" type="primary">efp</name>
    <name type="ordered locus">Desal_1895</name>
</gene>
<reference key="1">
    <citation type="submission" date="2009-06" db="EMBL/GenBank/DDBJ databases">
        <title>Complete sequence of Desulfovibrio salexigens DSM 2638.</title>
        <authorList>
            <consortium name="US DOE Joint Genome Institute"/>
            <person name="Lucas S."/>
            <person name="Copeland A."/>
            <person name="Lapidus A."/>
            <person name="Glavina del Rio T."/>
            <person name="Tice H."/>
            <person name="Bruce D."/>
            <person name="Goodwin L."/>
            <person name="Pitluck S."/>
            <person name="Munk A.C."/>
            <person name="Brettin T."/>
            <person name="Detter J.C."/>
            <person name="Han C."/>
            <person name="Tapia R."/>
            <person name="Larimer F."/>
            <person name="Land M."/>
            <person name="Hauser L."/>
            <person name="Kyrpides N."/>
            <person name="Anderson I."/>
            <person name="Wall J.D."/>
            <person name="Arkin A.P."/>
            <person name="Dehal P."/>
            <person name="Chivian D."/>
            <person name="Giles B."/>
            <person name="Hazen T.C."/>
        </authorList>
    </citation>
    <scope>NUCLEOTIDE SEQUENCE [LARGE SCALE GENOMIC DNA]</scope>
    <source>
        <strain>ATCC 14822 / DSM 2638 / NCIMB 8403 / VKM B-1763</strain>
    </source>
</reference>